<keyword id="KW-0378">Hydrolase</keyword>
<keyword id="KW-0479">Metal-binding</keyword>
<keyword id="KW-0862">Zinc</keyword>
<protein>
    <recommendedName>
        <fullName evidence="1">Hydroxyacylglutathione hydrolase</fullName>
        <ecNumber evidence="1">3.1.2.6</ecNumber>
    </recommendedName>
    <alternativeName>
        <fullName evidence="1">Glyoxalase II</fullName>
        <shortName evidence="1">Glx II</shortName>
    </alternativeName>
</protein>
<proteinExistence type="inferred from homology"/>
<evidence type="ECO:0000255" key="1">
    <source>
        <dbReference type="HAMAP-Rule" id="MF_01374"/>
    </source>
</evidence>
<organism>
    <name type="scientific">Francisella tularensis subsp. mediasiatica (strain FSC147)</name>
    <dbReference type="NCBI Taxonomy" id="441952"/>
    <lineage>
        <taxon>Bacteria</taxon>
        <taxon>Pseudomonadati</taxon>
        <taxon>Pseudomonadota</taxon>
        <taxon>Gammaproteobacteria</taxon>
        <taxon>Thiotrichales</taxon>
        <taxon>Francisellaceae</taxon>
        <taxon>Francisella</taxon>
    </lineage>
</organism>
<accession>B2SFR3</accession>
<comment type="function">
    <text evidence="1">Thiolesterase that catalyzes the hydrolysis of S-D-lactoyl-glutathione to form glutathione and D-lactic acid.</text>
</comment>
<comment type="catalytic activity">
    <reaction evidence="1">
        <text>an S-(2-hydroxyacyl)glutathione + H2O = a 2-hydroxy carboxylate + glutathione + H(+)</text>
        <dbReference type="Rhea" id="RHEA:21864"/>
        <dbReference type="ChEBI" id="CHEBI:15377"/>
        <dbReference type="ChEBI" id="CHEBI:15378"/>
        <dbReference type="ChEBI" id="CHEBI:57925"/>
        <dbReference type="ChEBI" id="CHEBI:58896"/>
        <dbReference type="ChEBI" id="CHEBI:71261"/>
        <dbReference type="EC" id="3.1.2.6"/>
    </reaction>
</comment>
<comment type="cofactor">
    <cofactor evidence="1">
        <name>Zn(2+)</name>
        <dbReference type="ChEBI" id="CHEBI:29105"/>
    </cofactor>
    <text evidence="1">Binds 2 Zn(2+) ions per subunit.</text>
</comment>
<comment type="pathway">
    <text evidence="1">Secondary metabolite metabolism; methylglyoxal degradation; (R)-lactate from methylglyoxal: step 2/2.</text>
</comment>
<comment type="subunit">
    <text evidence="1">Monomer.</text>
</comment>
<comment type="similarity">
    <text evidence="1">Belongs to the metallo-beta-lactamase superfamily. Glyoxalase II family.</text>
</comment>
<gene>
    <name evidence="1" type="primary">gloB</name>
    <name type="ordered locus">FTM_0616</name>
</gene>
<reference key="1">
    <citation type="journal article" date="2009" name="PLoS Pathog.">
        <title>Molecular evolutionary consequences of niche restriction in Francisella tularensis, a facultative intracellular pathogen.</title>
        <authorList>
            <person name="Larsson P."/>
            <person name="Elfsmark D."/>
            <person name="Svensson K."/>
            <person name="Wikstroem P."/>
            <person name="Forsman M."/>
            <person name="Brettin T."/>
            <person name="Keim P."/>
            <person name="Johansson A."/>
        </authorList>
    </citation>
    <scope>NUCLEOTIDE SEQUENCE [LARGE SCALE GENOMIC DNA]</scope>
    <source>
        <strain>FSC147</strain>
    </source>
</reference>
<name>GLO2_FRATM</name>
<feature type="chain" id="PRO_1000144768" description="Hydroxyacylglutathione hydrolase">
    <location>
        <begin position="1"/>
        <end position="252"/>
    </location>
</feature>
<feature type="binding site" evidence="1">
    <location>
        <position position="54"/>
    </location>
    <ligand>
        <name>Zn(2+)</name>
        <dbReference type="ChEBI" id="CHEBI:29105"/>
        <label>1</label>
    </ligand>
</feature>
<feature type="binding site" evidence="1">
    <location>
        <position position="56"/>
    </location>
    <ligand>
        <name>Zn(2+)</name>
        <dbReference type="ChEBI" id="CHEBI:29105"/>
        <label>1</label>
    </ligand>
</feature>
<feature type="binding site" evidence="1">
    <location>
        <position position="58"/>
    </location>
    <ligand>
        <name>Zn(2+)</name>
        <dbReference type="ChEBI" id="CHEBI:29105"/>
        <label>2</label>
    </ligand>
</feature>
<feature type="binding site" evidence="1">
    <location>
        <position position="59"/>
    </location>
    <ligand>
        <name>Zn(2+)</name>
        <dbReference type="ChEBI" id="CHEBI:29105"/>
        <label>2</label>
    </ligand>
</feature>
<feature type="binding site" evidence="1">
    <location>
        <position position="111"/>
    </location>
    <ligand>
        <name>Zn(2+)</name>
        <dbReference type="ChEBI" id="CHEBI:29105"/>
        <label>1</label>
    </ligand>
</feature>
<feature type="binding site" evidence="1">
    <location>
        <position position="130"/>
    </location>
    <ligand>
        <name>Zn(2+)</name>
        <dbReference type="ChEBI" id="CHEBI:29105"/>
        <label>1</label>
    </ligand>
</feature>
<feature type="binding site" evidence="1">
    <location>
        <position position="130"/>
    </location>
    <ligand>
        <name>Zn(2+)</name>
        <dbReference type="ChEBI" id="CHEBI:29105"/>
        <label>2</label>
    </ligand>
</feature>
<feature type="binding site" evidence="1">
    <location>
        <position position="170"/>
    </location>
    <ligand>
        <name>Zn(2+)</name>
        <dbReference type="ChEBI" id="CHEBI:29105"/>
        <label>2</label>
    </ligand>
</feature>
<sequence length="252" mass="28849">MQIKRWFLNNSLRNYQYLLYDKSHAIVIDPLKSDIFAEFIAKNKLQLEAILITHKHGDHIAGVKKLLAIYLNAKVYAYTGNDLFKPDIYVKDGSFINLGFTSFRVMYIPGHIDDHVCFLFEQERALFCGDTLFNAGVGGVQAESADINQLYDSLVKITKLDGDIKPYPAHDYWLGNLDFALSILADDSYFNYYRNQVAELAAEDKPIVNLAEEAKLNIFIRAMSDKALLKALPDYSLGREMFVKLRQLKNNF</sequence>
<dbReference type="EC" id="3.1.2.6" evidence="1"/>
<dbReference type="EMBL" id="CP000915">
    <property type="protein sequence ID" value="ACD30606.1"/>
    <property type="molecule type" value="Genomic_DNA"/>
</dbReference>
<dbReference type="SMR" id="B2SFR3"/>
<dbReference type="KEGG" id="ftm:FTM_0616"/>
<dbReference type="HOGENOM" id="CLU_030571_4_1_6"/>
<dbReference type="UniPathway" id="UPA00619">
    <property type="reaction ID" value="UER00676"/>
</dbReference>
<dbReference type="GO" id="GO:0004416">
    <property type="term" value="F:hydroxyacylglutathione hydrolase activity"/>
    <property type="evidence" value="ECO:0007669"/>
    <property type="project" value="UniProtKB-UniRule"/>
</dbReference>
<dbReference type="GO" id="GO:0046872">
    <property type="term" value="F:metal ion binding"/>
    <property type="evidence" value="ECO:0007669"/>
    <property type="project" value="UniProtKB-KW"/>
</dbReference>
<dbReference type="GO" id="GO:0019243">
    <property type="term" value="P:methylglyoxal catabolic process to D-lactate via S-lactoyl-glutathione"/>
    <property type="evidence" value="ECO:0007669"/>
    <property type="project" value="InterPro"/>
</dbReference>
<dbReference type="CDD" id="cd07723">
    <property type="entry name" value="hydroxyacylglutathione_hydrolase_MBL-fold"/>
    <property type="match status" value="1"/>
</dbReference>
<dbReference type="Gene3D" id="3.60.15.10">
    <property type="entry name" value="Ribonuclease Z/Hydroxyacylglutathione hydrolase-like"/>
    <property type="match status" value="1"/>
</dbReference>
<dbReference type="HAMAP" id="MF_01374">
    <property type="entry name" value="Glyoxalase_2"/>
    <property type="match status" value="1"/>
</dbReference>
<dbReference type="InterPro" id="IPR035680">
    <property type="entry name" value="Clx_II_MBL"/>
</dbReference>
<dbReference type="InterPro" id="IPR050110">
    <property type="entry name" value="Glyoxalase_II_hydrolase"/>
</dbReference>
<dbReference type="InterPro" id="IPR032282">
    <property type="entry name" value="HAGH_C"/>
</dbReference>
<dbReference type="InterPro" id="IPR017782">
    <property type="entry name" value="Hydroxyacylglutathione_Hdrlase"/>
</dbReference>
<dbReference type="InterPro" id="IPR001279">
    <property type="entry name" value="Metallo-B-lactamas"/>
</dbReference>
<dbReference type="InterPro" id="IPR036866">
    <property type="entry name" value="RibonucZ/Hydroxyglut_hydro"/>
</dbReference>
<dbReference type="PANTHER" id="PTHR43705">
    <property type="entry name" value="HYDROXYACYLGLUTATHIONE HYDROLASE"/>
    <property type="match status" value="1"/>
</dbReference>
<dbReference type="PANTHER" id="PTHR43705:SF1">
    <property type="entry name" value="HYDROXYACYLGLUTATHIONE HYDROLASE GLOB"/>
    <property type="match status" value="1"/>
</dbReference>
<dbReference type="Pfam" id="PF16123">
    <property type="entry name" value="HAGH_C"/>
    <property type="match status" value="1"/>
</dbReference>
<dbReference type="Pfam" id="PF00753">
    <property type="entry name" value="Lactamase_B"/>
    <property type="match status" value="1"/>
</dbReference>
<dbReference type="SMART" id="SM00849">
    <property type="entry name" value="Lactamase_B"/>
    <property type="match status" value="1"/>
</dbReference>
<dbReference type="SUPFAM" id="SSF56281">
    <property type="entry name" value="Metallo-hydrolase/oxidoreductase"/>
    <property type="match status" value="1"/>
</dbReference>